<evidence type="ECO:0000255" key="1">
    <source>
        <dbReference type="HAMAP-Rule" id="MF_01694"/>
    </source>
</evidence>
<evidence type="ECO:0000255" key="2">
    <source>
        <dbReference type="PROSITE-ProRule" id="PRU01266"/>
    </source>
</evidence>
<name>BIOB_HAEDU</name>
<proteinExistence type="inferred from homology"/>
<sequence length="334" mass="37349">MTTYNLRLKAKDELTPHPSVQYWRKCQVEELFAMPFMELVFKAAQVHREHFDPQAIQLSTLLSIKTGGCPEECEYCPQSARYDTGLEKQVMLDIEEIVEKAKIAKQRGASRFCMGAAWRGPKPKDIKVVSEIIGAVKALGLETCGTFGLLEDGMAEDLKQAGLDYYNHNLDTDPERYSKVVHTRSHDDRMDTLGKVRHAGLKVCCGGIVGMNETRPERAGLIASLANLDPQPESVPINQLIKVEGTPMAEAEDLDWTEFVRTIAVARITMPKSYVRLSAGRTAMSEAMQTLCFIAGANSIFYGEKLLTTCNPEEDADCLLMQKLDLYPLQYQEC</sequence>
<dbReference type="EC" id="2.8.1.6" evidence="1"/>
<dbReference type="EMBL" id="AE017143">
    <property type="protein sequence ID" value="AAP95886.1"/>
    <property type="molecule type" value="Genomic_DNA"/>
</dbReference>
<dbReference type="RefSeq" id="WP_010944936.1">
    <property type="nucleotide sequence ID" value="NC_002940.2"/>
</dbReference>
<dbReference type="SMR" id="Q7VMH0"/>
<dbReference type="STRING" id="233412.HD_1007"/>
<dbReference type="KEGG" id="hdu:HD_1007"/>
<dbReference type="eggNOG" id="COG0502">
    <property type="taxonomic scope" value="Bacteria"/>
</dbReference>
<dbReference type="HOGENOM" id="CLU_033172_1_2_6"/>
<dbReference type="OrthoDB" id="9786826at2"/>
<dbReference type="UniPathway" id="UPA00078">
    <property type="reaction ID" value="UER00162"/>
</dbReference>
<dbReference type="Proteomes" id="UP000001022">
    <property type="component" value="Chromosome"/>
</dbReference>
<dbReference type="GO" id="GO:0051537">
    <property type="term" value="F:2 iron, 2 sulfur cluster binding"/>
    <property type="evidence" value="ECO:0007669"/>
    <property type="project" value="UniProtKB-KW"/>
</dbReference>
<dbReference type="GO" id="GO:0051539">
    <property type="term" value="F:4 iron, 4 sulfur cluster binding"/>
    <property type="evidence" value="ECO:0007669"/>
    <property type="project" value="UniProtKB-KW"/>
</dbReference>
<dbReference type="GO" id="GO:0004076">
    <property type="term" value="F:biotin synthase activity"/>
    <property type="evidence" value="ECO:0007669"/>
    <property type="project" value="UniProtKB-UniRule"/>
</dbReference>
<dbReference type="GO" id="GO:0005506">
    <property type="term" value="F:iron ion binding"/>
    <property type="evidence" value="ECO:0007669"/>
    <property type="project" value="UniProtKB-UniRule"/>
</dbReference>
<dbReference type="GO" id="GO:0009102">
    <property type="term" value="P:biotin biosynthetic process"/>
    <property type="evidence" value="ECO:0007669"/>
    <property type="project" value="UniProtKB-UniRule"/>
</dbReference>
<dbReference type="CDD" id="cd01335">
    <property type="entry name" value="Radical_SAM"/>
    <property type="match status" value="1"/>
</dbReference>
<dbReference type="FunFam" id="3.20.20.70:FF:000011">
    <property type="entry name" value="Biotin synthase"/>
    <property type="match status" value="1"/>
</dbReference>
<dbReference type="Gene3D" id="3.20.20.70">
    <property type="entry name" value="Aldolase class I"/>
    <property type="match status" value="1"/>
</dbReference>
<dbReference type="HAMAP" id="MF_01694">
    <property type="entry name" value="BioB"/>
    <property type="match status" value="1"/>
</dbReference>
<dbReference type="InterPro" id="IPR013785">
    <property type="entry name" value="Aldolase_TIM"/>
</dbReference>
<dbReference type="InterPro" id="IPR010722">
    <property type="entry name" value="BATS_dom"/>
</dbReference>
<dbReference type="InterPro" id="IPR002684">
    <property type="entry name" value="Biotin_synth/BioAB"/>
</dbReference>
<dbReference type="InterPro" id="IPR024177">
    <property type="entry name" value="Biotin_synthase"/>
</dbReference>
<dbReference type="InterPro" id="IPR006638">
    <property type="entry name" value="Elp3/MiaA/NifB-like_rSAM"/>
</dbReference>
<dbReference type="InterPro" id="IPR007197">
    <property type="entry name" value="rSAM"/>
</dbReference>
<dbReference type="NCBIfam" id="TIGR00433">
    <property type="entry name" value="bioB"/>
    <property type="match status" value="1"/>
</dbReference>
<dbReference type="PANTHER" id="PTHR22976">
    <property type="entry name" value="BIOTIN SYNTHASE"/>
    <property type="match status" value="1"/>
</dbReference>
<dbReference type="PANTHER" id="PTHR22976:SF2">
    <property type="entry name" value="BIOTIN SYNTHASE, MITOCHONDRIAL"/>
    <property type="match status" value="1"/>
</dbReference>
<dbReference type="Pfam" id="PF06968">
    <property type="entry name" value="BATS"/>
    <property type="match status" value="1"/>
</dbReference>
<dbReference type="Pfam" id="PF04055">
    <property type="entry name" value="Radical_SAM"/>
    <property type="match status" value="1"/>
</dbReference>
<dbReference type="PIRSF" id="PIRSF001619">
    <property type="entry name" value="Biotin_synth"/>
    <property type="match status" value="1"/>
</dbReference>
<dbReference type="SFLD" id="SFLDG01060">
    <property type="entry name" value="BATS_domain_containing"/>
    <property type="match status" value="1"/>
</dbReference>
<dbReference type="SFLD" id="SFLDF00272">
    <property type="entry name" value="biotin_synthase"/>
    <property type="match status" value="1"/>
</dbReference>
<dbReference type="SMART" id="SM00876">
    <property type="entry name" value="BATS"/>
    <property type="match status" value="1"/>
</dbReference>
<dbReference type="SMART" id="SM00729">
    <property type="entry name" value="Elp3"/>
    <property type="match status" value="1"/>
</dbReference>
<dbReference type="SUPFAM" id="SSF102114">
    <property type="entry name" value="Radical SAM enzymes"/>
    <property type="match status" value="1"/>
</dbReference>
<dbReference type="PROSITE" id="PS51918">
    <property type="entry name" value="RADICAL_SAM"/>
    <property type="match status" value="1"/>
</dbReference>
<gene>
    <name evidence="1" type="primary">bioB</name>
    <name type="ordered locus">HD_1007</name>
</gene>
<reference key="1">
    <citation type="submission" date="2003-06" db="EMBL/GenBank/DDBJ databases">
        <title>The complete genome sequence of Haemophilus ducreyi.</title>
        <authorList>
            <person name="Munson R.S. Jr."/>
            <person name="Ray W.C."/>
            <person name="Mahairas G."/>
            <person name="Sabo P."/>
            <person name="Mungur R."/>
            <person name="Johnson L."/>
            <person name="Nguyen D."/>
            <person name="Wang J."/>
            <person name="Forst C."/>
            <person name="Hood L."/>
        </authorList>
    </citation>
    <scope>NUCLEOTIDE SEQUENCE [LARGE SCALE GENOMIC DNA]</scope>
    <source>
        <strain>35000HP / ATCC 700724</strain>
    </source>
</reference>
<feature type="chain" id="PRO_0000381413" description="Biotin synthase">
    <location>
        <begin position="1"/>
        <end position="334"/>
    </location>
</feature>
<feature type="domain" description="Radical SAM core" evidence="2">
    <location>
        <begin position="54"/>
        <end position="281"/>
    </location>
</feature>
<feature type="binding site" evidence="1">
    <location>
        <position position="69"/>
    </location>
    <ligand>
        <name>[4Fe-4S] cluster</name>
        <dbReference type="ChEBI" id="CHEBI:49883"/>
        <note>4Fe-4S-S-AdoMet</note>
    </ligand>
</feature>
<feature type="binding site" evidence="1">
    <location>
        <position position="73"/>
    </location>
    <ligand>
        <name>[4Fe-4S] cluster</name>
        <dbReference type="ChEBI" id="CHEBI:49883"/>
        <note>4Fe-4S-S-AdoMet</note>
    </ligand>
</feature>
<feature type="binding site" evidence="1">
    <location>
        <position position="76"/>
    </location>
    <ligand>
        <name>[4Fe-4S] cluster</name>
        <dbReference type="ChEBI" id="CHEBI:49883"/>
        <note>4Fe-4S-S-AdoMet</note>
    </ligand>
</feature>
<feature type="binding site" evidence="1">
    <location>
        <position position="113"/>
    </location>
    <ligand>
        <name>[2Fe-2S] cluster</name>
        <dbReference type="ChEBI" id="CHEBI:190135"/>
    </ligand>
</feature>
<feature type="binding site" evidence="1">
    <location>
        <position position="144"/>
    </location>
    <ligand>
        <name>[2Fe-2S] cluster</name>
        <dbReference type="ChEBI" id="CHEBI:190135"/>
    </ligand>
</feature>
<feature type="binding site" evidence="1">
    <location>
        <position position="204"/>
    </location>
    <ligand>
        <name>[2Fe-2S] cluster</name>
        <dbReference type="ChEBI" id="CHEBI:190135"/>
    </ligand>
</feature>
<feature type="binding site" evidence="1">
    <location>
        <position position="276"/>
    </location>
    <ligand>
        <name>[2Fe-2S] cluster</name>
        <dbReference type="ChEBI" id="CHEBI:190135"/>
    </ligand>
</feature>
<comment type="function">
    <text evidence="1">Catalyzes the conversion of dethiobiotin (DTB) to biotin by the insertion of a sulfur atom into dethiobiotin via a radical-based mechanism.</text>
</comment>
<comment type="catalytic activity">
    <reaction evidence="1">
        <text>(4R,5S)-dethiobiotin + (sulfur carrier)-SH + 2 reduced [2Fe-2S]-[ferredoxin] + 2 S-adenosyl-L-methionine = (sulfur carrier)-H + biotin + 2 5'-deoxyadenosine + 2 L-methionine + 2 oxidized [2Fe-2S]-[ferredoxin]</text>
        <dbReference type="Rhea" id="RHEA:22060"/>
        <dbReference type="Rhea" id="RHEA-COMP:10000"/>
        <dbReference type="Rhea" id="RHEA-COMP:10001"/>
        <dbReference type="Rhea" id="RHEA-COMP:14737"/>
        <dbReference type="Rhea" id="RHEA-COMP:14739"/>
        <dbReference type="ChEBI" id="CHEBI:17319"/>
        <dbReference type="ChEBI" id="CHEBI:29917"/>
        <dbReference type="ChEBI" id="CHEBI:33737"/>
        <dbReference type="ChEBI" id="CHEBI:33738"/>
        <dbReference type="ChEBI" id="CHEBI:57586"/>
        <dbReference type="ChEBI" id="CHEBI:57844"/>
        <dbReference type="ChEBI" id="CHEBI:59789"/>
        <dbReference type="ChEBI" id="CHEBI:64428"/>
        <dbReference type="ChEBI" id="CHEBI:149473"/>
        <dbReference type="EC" id="2.8.1.6"/>
    </reaction>
</comment>
<comment type="cofactor">
    <cofactor evidence="1">
        <name>[4Fe-4S] cluster</name>
        <dbReference type="ChEBI" id="CHEBI:49883"/>
    </cofactor>
    <text evidence="1">Binds 1 [4Fe-4S] cluster. The cluster is coordinated with 3 cysteines and an exchangeable S-adenosyl-L-methionine.</text>
</comment>
<comment type="cofactor">
    <cofactor evidence="1">
        <name>[2Fe-2S] cluster</name>
        <dbReference type="ChEBI" id="CHEBI:190135"/>
    </cofactor>
    <text evidence="1">Binds 1 [2Fe-2S] cluster. The cluster is coordinated with 3 cysteines and 1 arginine.</text>
</comment>
<comment type="pathway">
    <text evidence="1">Cofactor biosynthesis; biotin biosynthesis; biotin from 7,8-diaminononanoate: step 2/2.</text>
</comment>
<comment type="subunit">
    <text evidence="1">Homodimer.</text>
</comment>
<comment type="similarity">
    <text evidence="1">Belongs to the radical SAM superfamily. Biotin synthase family.</text>
</comment>
<keyword id="KW-0001">2Fe-2S</keyword>
<keyword id="KW-0004">4Fe-4S</keyword>
<keyword id="KW-0093">Biotin biosynthesis</keyword>
<keyword id="KW-0408">Iron</keyword>
<keyword id="KW-0411">Iron-sulfur</keyword>
<keyword id="KW-0479">Metal-binding</keyword>
<keyword id="KW-1185">Reference proteome</keyword>
<keyword id="KW-0949">S-adenosyl-L-methionine</keyword>
<keyword id="KW-0808">Transferase</keyword>
<protein>
    <recommendedName>
        <fullName evidence="1">Biotin synthase</fullName>
        <ecNumber evidence="1">2.8.1.6</ecNumber>
    </recommendedName>
</protein>
<organism>
    <name type="scientific">Haemophilus ducreyi (strain 35000HP / ATCC 700724)</name>
    <dbReference type="NCBI Taxonomy" id="233412"/>
    <lineage>
        <taxon>Bacteria</taxon>
        <taxon>Pseudomonadati</taxon>
        <taxon>Pseudomonadota</taxon>
        <taxon>Gammaproteobacteria</taxon>
        <taxon>Pasteurellales</taxon>
        <taxon>Pasteurellaceae</taxon>
        <taxon>Haemophilus</taxon>
    </lineage>
</organism>
<accession>Q7VMH0</accession>